<organism>
    <name type="scientific">Shigella boydii serotype 18 (strain CDC 3083-94 / BS512)</name>
    <dbReference type="NCBI Taxonomy" id="344609"/>
    <lineage>
        <taxon>Bacteria</taxon>
        <taxon>Pseudomonadati</taxon>
        <taxon>Pseudomonadota</taxon>
        <taxon>Gammaproteobacteria</taxon>
        <taxon>Enterobacterales</taxon>
        <taxon>Enterobacteriaceae</taxon>
        <taxon>Shigella</taxon>
    </lineage>
</organism>
<protein>
    <recommendedName>
        <fullName evidence="1">4-hydroxy-tetrahydrodipicolinate reductase</fullName>
        <shortName evidence="1">HTPA reductase</shortName>
        <ecNumber evidence="1">1.17.1.8</ecNumber>
    </recommendedName>
</protein>
<keyword id="KW-0028">Amino-acid biosynthesis</keyword>
<keyword id="KW-0963">Cytoplasm</keyword>
<keyword id="KW-0220">Diaminopimelate biosynthesis</keyword>
<keyword id="KW-0457">Lysine biosynthesis</keyword>
<keyword id="KW-0520">NAD</keyword>
<keyword id="KW-0521">NADP</keyword>
<keyword id="KW-0560">Oxidoreductase</keyword>
<keyword id="KW-1185">Reference proteome</keyword>
<accession>B2U250</accession>
<comment type="function">
    <text evidence="1">Catalyzes the conversion of 4-hydroxy-tetrahydrodipicolinate (HTPA) to tetrahydrodipicolinate.</text>
</comment>
<comment type="catalytic activity">
    <reaction evidence="1">
        <text>(S)-2,3,4,5-tetrahydrodipicolinate + NAD(+) + H2O = (2S,4S)-4-hydroxy-2,3,4,5-tetrahydrodipicolinate + NADH + H(+)</text>
        <dbReference type="Rhea" id="RHEA:35323"/>
        <dbReference type="ChEBI" id="CHEBI:15377"/>
        <dbReference type="ChEBI" id="CHEBI:15378"/>
        <dbReference type="ChEBI" id="CHEBI:16845"/>
        <dbReference type="ChEBI" id="CHEBI:57540"/>
        <dbReference type="ChEBI" id="CHEBI:57945"/>
        <dbReference type="ChEBI" id="CHEBI:67139"/>
        <dbReference type="EC" id="1.17.1.8"/>
    </reaction>
</comment>
<comment type="catalytic activity">
    <reaction evidence="1">
        <text>(S)-2,3,4,5-tetrahydrodipicolinate + NADP(+) + H2O = (2S,4S)-4-hydroxy-2,3,4,5-tetrahydrodipicolinate + NADPH + H(+)</text>
        <dbReference type="Rhea" id="RHEA:35331"/>
        <dbReference type="ChEBI" id="CHEBI:15377"/>
        <dbReference type="ChEBI" id="CHEBI:15378"/>
        <dbReference type="ChEBI" id="CHEBI:16845"/>
        <dbReference type="ChEBI" id="CHEBI:57783"/>
        <dbReference type="ChEBI" id="CHEBI:58349"/>
        <dbReference type="ChEBI" id="CHEBI:67139"/>
        <dbReference type="EC" id="1.17.1.8"/>
    </reaction>
</comment>
<comment type="pathway">
    <text evidence="1">Amino-acid biosynthesis; L-lysine biosynthesis via DAP pathway; (S)-tetrahydrodipicolinate from L-aspartate: step 4/4.</text>
</comment>
<comment type="subunit">
    <text evidence="1">Homotetramer.</text>
</comment>
<comment type="subcellular location">
    <subcellularLocation>
        <location evidence="1">Cytoplasm</location>
    </subcellularLocation>
</comment>
<comment type="similarity">
    <text evidence="1">Belongs to the DapB family.</text>
</comment>
<comment type="caution">
    <text evidence="2">Was originally thought to be a dihydrodipicolinate reductase (DHDPR), catalyzing the conversion of dihydrodipicolinate to tetrahydrodipicolinate. However, it was shown in E.coli that the substrate of the enzymatic reaction is not dihydrodipicolinate (DHDP) but in fact (2S,4S)-4-hydroxy-2,3,4,5-tetrahydrodipicolinic acid (HTPA), the product released by the DapA-catalyzed reaction.</text>
</comment>
<evidence type="ECO:0000255" key="1">
    <source>
        <dbReference type="HAMAP-Rule" id="MF_00102"/>
    </source>
</evidence>
<evidence type="ECO:0000305" key="2"/>
<dbReference type="EC" id="1.17.1.8" evidence="1"/>
<dbReference type="EMBL" id="CP001063">
    <property type="protein sequence ID" value="ACD09135.1"/>
    <property type="molecule type" value="Genomic_DNA"/>
</dbReference>
<dbReference type="RefSeq" id="WP_000543609.1">
    <property type="nucleotide sequence ID" value="NC_010658.1"/>
</dbReference>
<dbReference type="SMR" id="B2U250"/>
<dbReference type="STRING" id="344609.SbBS512_E0035"/>
<dbReference type="KEGG" id="sbc:SbBS512_E0035"/>
<dbReference type="HOGENOM" id="CLU_047479_2_1_6"/>
<dbReference type="UniPathway" id="UPA00034">
    <property type="reaction ID" value="UER00018"/>
</dbReference>
<dbReference type="Proteomes" id="UP000001030">
    <property type="component" value="Chromosome"/>
</dbReference>
<dbReference type="GO" id="GO:0005829">
    <property type="term" value="C:cytosol"/>
    <property type="evidence" value="ECO:0007669"/>
    <property type="project" value="TreeGrafter"/>
</dbReference>
<dbReference type="GO" id="GO:0008839">
    <property type="term" value="F:4-hydroxy-tetrahydrodipicolinate reductase"/>
    <property type="evidence" value="ECO:0007669"/>
    <property type="project" value="UniProtKB-EC"/>
</dbReference>
<dbReference type="GO" id="GO:0051287">
    <property type="term" value="F:NAD binding"/>
    <property type="evidence" value="ECO:0007669"/>
    <property type="project" value="UniProtKB-UniRule"/>
</dbReference>
<dbReference type="GO" id="GO:0050661">
    <property type="term" value="F:NADP binding"/>
    <property type="evidence" value="ECO:0007669"/>
    <property type="project" value="UniProtKB-UniRule"/>
</dbReference>
<dbReference type="GO" id="GO:0016726">
    <property type="term" value="F:oxidoreductase activity, acting on CH or CH2 groups, NAD or NADP as acceptor"/>
    <property type="evidence" value="ECO:0007669"/>
    <property type="project" value="UniProtKB-UniRule"/>
</dbReference>
<dbReference type="GO" id="GO:0019877">
    <property type="term" value="P:diaminopimelate biosynthetic process"/>
    <property type="evidence" value="ECO:0007669"/>
    <property type="project" value="UniProtKB-UniRule"/>
</dbReference>
<dbReference type="GO" id="GO:0009089">
    <property type="term" value="P:lysine biosynthetic process via diaminopimelate"/>
    <property type="evidence" value="ECO:0007669"/>
    <property type="project" value="UniProtKB-UniRule"/>
</dbReference>
<dbReference type="CDD" id="cd02274">
    <property type="entry name" value="DHDPR_N"/>
    <property type="match status" value="1"/>
</dbReference>
<dbReference type="FunFam" id="3.30.360.10:FF:000004">
    <property type="entry name" value="4-hydroxy-tetrahydrodipicolinate reductase"/>
    <property type="match status" value="1"/>
</dbReference>
<dbReference type="FunFam" id="3.40.50.720:FF:000048">
    <property type="entry name" value="4-hydroxy-tetrahydrodipicolinate reductase"/>
    <property type="match status" value="1"/>
</dbReference>
<dbReference type="Gene3D" id="3.30.360.10">
    <property type="entry name" value="Dihydrodipicolinate Reductase, domain 2"/>
    <property type="match status" value="1"/>
</dbReference>
<dbReference type="Gene3D" id="3.40.50.720">
    <property type="entry name" value="NAD(P)-binding Rossmann-like Domain"/>
    <property type="match status" value="1"/>
</dbReference>
<dbReference type="HAMAP" id="MF_00102">
    <property type="entry name" value="DapB"/>
    <property type="match status" value="1"/>
</dbReference>
<dbReference type="InterPro" id="IPR022663">
    <property type="entry name" value="DapB_C"/>
</dbReference>
<dbReference type="InterPro" id="IPR000846">
    <property type="entry name" value="DapB_N"/>
</dbReference>
<dbReference type="InterPro" id="IPR022664">
    <property type="entry name" value="DapB_N_CS"/>
</dbReference>
<dbReference type="InterPro" id="IPR023940">
    <property type="entry name" value="DHDPR_bac"/>
</dbReference>
<dbReference type="InterPro" id="IPR036291">
    <property type="entry name" value="NAD(P)-bd_dom_sf"/>
</dbReference>
<dbReference type="NCBIfam" id="TIGR00036">
    <property type="entry name" value="dapB"/>
    <property type="match status" value="1"/>
</dbReference>
<dbReference type="PANTHER" id="PTHR20836:SF0">
    <property type="entry name" value="4-HYDROXY-TETRAHYDRODIPICOLINATE REDUCTASE 1, CHLOROPLASTIC-RELATED"/>
    <property type="match status" value="1"/>
</dbReference>
<dbReference type="PANTHER" id="PTHR20836">
    <property type="entry name" value="DIHYDRODIPICOLINATE REDUCTASE"/>
    <property type="match status" value="1"/>
</dbReference>
<dbReference type="Pfam" id="PF05173">
    <property type="entry name" value="DapB_C"/>
    <property type="match status" value="1"/>
</dbReference>
<dbReference type="Pfam" id="PF01113">
    <property type="entry name" value="DapB_N"/>
    <property type="match status" value="1"/>
</dbReference>
<dbReference type="PIRSF" id="PIRSF000161">
    <property type="entry name" value="DHPR"/>
    <property type="match status" value="1"/>
</dbReference>
<dbReference type="SUPFAM" id="SSF55347">
    <property type="entry name" value="Glyceraldehyde-3-phosphate dehydrogenase-like, C-terminal domain"/>
    <property type="match status" value="1"/>
</dbReference>
<dbReference type="SUPFAM" id="SSF51735">
    <property type="entry name" value="NAD(P)-binding Rossmann-fold domains"/>
    <property type="match status" value="1"/>
</dbReference>
<dbReference type="PROSITE" id="PS01298">
    <property type="entry name" value="DAPB"/>
    <property type="match status" value="1"/>
</dbReference>
<sequence length="273" mass="28794">MHDANIRVAIAGAGGRMGRQLIQAALALEGVQLGAALEREGSSLLGSDAGELAGAGKTGVTVQSSLDAVKDDFDVFIDFTRPEGTLNHLAFCRQHGKGMVIGTTGFDEAGKQAIRDAAADIAIVFAANFSVGVNVMLKLLEKAAKVMGDYTDIEIIEAHHRHKVDAPSGTALAMGEAIAHALDKDLKDCAVYSRESHTGERVPGTIGFATVRAGDIVGEHTAMFADIGERLEITHKASSRMTFANGAVRSAFWLSGKESGLFDMRDVLDLNSL</sequence>
<proteinExistence type="inferred from homology"/>
<feature type="chain" id="PRO_1000094002" description="4-hydroxy-tetrahydrodipicolinate reductase">
    <location>
        <begin position="1"/>
        <end position="273"/>
    </location>
</feature>
<feature type="active site" description="Proton donor/acceptor" evidence="1">
    <location>
        <position position="159"/>
    </location>
</feature>
<feature type="active site" description="Proton donor" evidence="1">
    <location>
        <position position="163"/>
    </location>
</feature>
<feature type="binding site" evidence="1">
    <location>
        <begin position="12"/>
        <end position="17"/>
    </location>
    <ligand>
        <name>NAD(+)</name>
        <dbReference type="ChEBI" id="CHEBI:57540"/>
    </ligand>
</feature>
<feature type="binding site" evidence="1">
    <location>
        <position position="38"/>
    </location>
    <ligand>
        <name>NAD(+)</name>
        <dbReference type="ChEBI" id="CHEBI:57540"/>
    </ligand>
</feature>
<feature type="binding site" evidence="1">
    <location>
        <position position="39"/>
    </location>
    <ligand>
        <name>NADP(+)</name>
        <dbReference type="ChEBI" id="CHEBI:58349"/>
    </ligand>
</feature>
<feature type="binding site" evidence="1">
    <location>
        <begin position="102"/>
        <end position="104"/>
    </location>
    <ligand>
        <name>NAD(+)</name>
        <dbReference type="ChEBI" id="CHEBI:57540"/>
    </ligand>
</feature>
<feature type="binding site" evidence="1">
    <location>
        <begin position="126"/>
        <end position="129"/>
    </location>
    <ligand>
        <name>NAD(+)</name>
        <dbReference type="ChEBI" id="CHEBI:57540"/>
    </ligand>
</feature>
<feature type="binding site" evidence="1">
    <location>
        <position position="160"/>
    </location>
    <ligand>
        <name>(S)-2,3,4,5-tetrahydrodipicolinate</name>
        <dbReference type="ChEBI" id="CHEBI:16845"/>
    </ligand>
</feature>
<feature type="binding site" evidence="1">
    <location>
        <begin position="169"/>
        <end position="170"/>
    </location>
    <ligand>
        <name>(S)-2,3,4,5-tetrahydrodipicolinate</name>
        <dbReference type="ChEBI" id="CHEBI:16845"/>
    </ligand>
</feature>
<name>DAPB_SHIB3</name>
<gene>
    <name evidence="1" type="primary">dapB</name>
    <name type="ordered locus">SbBS512_E0035</name>
</gene>
<reference key="1">
    <citation type="submission" date="2008-05" db="EMBL/GenBank/DDBJ databases">
        <title>Complete sequence of Shigella boydii serotype 18 strain BS512.</title>
        <authorList>
            <person name="Rasko D.A."/>
            <person name="Rosovitz M."/>
            <person name="Maurelli A.T."/>
            <person name="Myers G."/>
            <person name="Seshadri R."/>
            <person name="Cer R."/>
            <person name="Jiang L."/>
            <person name="Ravel J."/>
            <person name="Sebastian Y."/>
        </authorList>
    </citation>
    <scope>NUCLEOTIDE SEQUENCE [LARGE SCALE GENOMIC DNA]</scope>
    <source>
        <strain>CDC 3083-94 / BS512</strain>
    </source>
</reference>